<feature type="chain" id="PRO_0000270247" description="Methionine import ATP-binding protein MetN">
    <location>
        <begin position="1"/>
        <end position="341"/>
    </location>
</feature>
<feature type="domain" description="ABC transporter" evidence="1">
    <location>
        <begin position="2"/>
        <end position="241"/>
    </location>
</feature>
<feature type="binding site" evidence="1">
    <location>
        <begin position="38"/>
        <end position="45"/>
    </location>
    <ligand>
        <name>ATP</name>
        <dbReference type="ChEBI" id="CHEBI:30616"/>
    </ligand>
</feature>
<accession>O32169</accession>
<sequence length="341" mass="37886">MINLQDVSKVYKSKHGDVNAVQNVSLSIKKGEIFGIIGYSGAGKSSLIRLLNGLEKPTSGTVEVAGTKINEVNGRGLRKARHEISMIFQHFNLLWSRTVRDNIMFPLEIAGVKKSERIKRANELIKLVGLEGKEKSYPSQLSGGQKQRVGIARALANNPKVLLCDEATSALDPQTTDSILDLLSDINERLGLTIVLITHEMHVIRKICNRVAVMENGKVVEEGEVLDVFKNPKEQMTKRFVQQVTEPEETKETLQHLLDDTASGKMVQLTFVGESAEQPLITEMIRNFNVSVNILQGKISQTKDGAYGSLFIHIDGDEEEVQNVIRFINDKQVKAEVITNV</sequence>
<gene>
    <name evidence="1 3" type="primary">metN</name>
    <name type="synonym">yusC</name>
    <name type="ordered locus">BSU32750</name>
</gene>
<protein>
    <recommendedName>
        <fullName evidence="1">Methionine import ATP-binding protein MetN</fullName>
        <ecNumber evidence="1 2">7.4.2.11</ecNumber>
    </recommendedName>
</protein>
<evidence type="ECO:0000255" key="1">
    <source>
        <dbReference type="HAMAP-Rule" id="MF_01719"/>
    </source>
</evidence>
<evidence type="ECO:0000269" key="2">
    <source>
    </source>
</evidence>
<evidence type="ECO:0000303" key="3">
    <source>
    </source>
</evidence>
<evidence type="ECO:0000305" key="4"/>
<proteinExistence type="evidence at protein level"/>
<keyword id="KW-0029">Amino-acid transport</keyword>
<keyword id="KW-0067">ATP-binding</keyword>
<keyword id="KW-1003">Cell membrane</keyword>
<keyword id="KW-0472">Membrane</keyword>
<keyword id="KW-0547">Nucleotide-binding</keyword>
<keyword id="KW-1185">Reference proteome</keyword>
<keyword id="KW-1278">Translocase</keyword>
<keyword id="KW-0813">Transport</keyword>
<reference key="1">
    <citation type="journal article" date="1997" name="Nature">
        <title>The complete genome sequence of the Gram-positive bacterium Bacillus subtilis.</title>
        <authorList>
            <person name="Kunst F."/>
            <person name="Ogasawara N."/>
            <person name="Moszer I."/>
            <person name="Albertini A.M."/>
            <person name="Alloni G."/>
            <person name="Azevedo V."/>
            <person name="Bertero M.G."/>
            <person name="Bessieres P."/>
            <person name="Bolotin A."/>
            <person name="Borchert S."/>
            <person name="Borriss R."/>
            <person name="Boursier L."/>
            <person name="Brans A."/>
            <person name="Braun M."/>
            <person name="Brignell S.C."/>
            <person name="Bron S."/>
            <person name="Brouillet S."/>
            <person name="Bruschi C.V."/>
            <person name="Caldwell B."/>
            <person name="Capuano V."/>
            <person name="Carter N.M."/>
            <person name="Choi S.-K."/>
            <person name="Codani J.-J."/>
            <person name="Connerton I.F."/>
            <person name="Cummings N.J."/>
            <person name="Daniel R.A."/>
            <person name="Denizot F."/>
            <person name="Devine K.M."/>
            <person name="Duesterhoeft A."/>
            <person name="Ehrlich S.D."/>
            <person name="Emmerson P.T."/>
            <person name="Entian K.-D."/>
            <person name="Errington J."/>
            <person name="Fabret C."/>
            <person name="Ferrari E."/>
            <person name="Foulger D."/>
            <person name="Fritz C."/>
            <person name="Fujita M."/>
            <person name="Fujita Y."/>
            <person name="Fuma S."/>
            <person name="Galizzi A."/>
            <person name="Galleron N."/>
            <person name="Ghim S.-Y."/>
            <person name="Glaser P."/>
            <person name="Goffeau A."/>
            <person name="Golightly E.J."/>
            <person name="Grandi G."/>
            <person name="Guiseppi G."/>
            <person name="Guy B.J."/>
            <person name="Haga K."/>
            <person name="Haiech J."/>
            <person name="Harwood C.R."/>
            <person name="Henaut A."/>
            <person name="Hilbert H."/>
            <person name="Holsappel S."/>
            <person name="Hosono S."/>
            <person name="Hullo M.-F."/>
            <person name="Itaya M."/>
            <person name="Jones L.-M."/>
            <person name="Joris B."/>
            <person name="Karamata D."/>
            <person name="Kasahara Y."/>
            <person name="Klaerr-Blanchard M."/>
            <person name="Klein C."/>
            <person name="Kobayashi Y."/>
            <person name="Koetter P."/>
            <person name="Koningstein G."/>
            <person name="Krogh S."/>
            <person name="Kumano M."/>
            <person name="Kurita K."/>
            <person name="Lapidus A."/>
            <person name="Lardinois S."/>
            <person name="Lauber J."/>
            <person name="Lazarevic V."/>
            <person name="Lee S.-M."/>
            <person name="Levine A."/>
            <person name="Liu H."/>
            <person name="Masuda S."/>
            <person name="Mauel C."/>
            <person name="Medigue C."/>
            <person name="Medina N."/>
            <person name="Mellado R.P."/>
            <person name="Mizuno M."/>
            <person name="Moestl D."/>
            <person name="Nakai S."/>
            <person name="Noback M."/>
            <person name="Noone D."/>
            <person name="O'Reilly M."/>
            <person name="Ogawa K."/>
            <person name="Ogiwara A."/>
            <person name="Oudega B."/>
            <person name="Park S.-H."/>
            <person name="Parro V."/>
            <person name="Pohl T.M."/>
            <person name="Portetelle D."/>
            <person name="Porwollik S."/>
            <person name="Prescott A.M."/>
            <person name="Presecan E."/>
            <person name="Pujic P."/>
            <person name="Purnelle B."/>
            <person name="Rapoport G."/>
            <person name="Rey M."/>
            <person name="Reynolds S."/>
            <person name="Rieger M."/>
            <person name="Rivolta C."/>
            <person name="Rocha E."/>
            <person name="Roche B."/>
            <person name="Rose M."/>
            <person name="Sadaie Y."/>
            <person name="Sato T."/>
            <person name="Scanlan E."/>
            <person name="Schleich S."/>
            <person name="Schroeter R."/>
            <person name="Scoffone F."/>
            <person name="Sekiguchi J."/>
            <person name="Sekowska A."/>
            <person name="Seror S.J."/>
            <person name="Serror P."/>
            <person name="Shin B.-S."/>
            <person name="Soldo B."/>
            <person name="Sorokin A."/>
            <person name="Tacconi E."/>
            <person name="Takagi T."/>
            <person name="Takahashi H."/>
            <person name="Takemaru K."/>
            <person name="Takeuchi M."/>
            <person name="Tamakoshi A."/>
            <person name="Tanaka T."/>
            <person name="Terpstra P."/>
            <person name="Tognoni A."/>
            <person name="Tosato V."/>
            <person name="Uchiyama S."/>
            <person name="Vandenbol M."/>
            <person name="Vannier F."/>
            <person name="Vassarotti A."/>
            <person name="Viari A."/>
            <person name="Wambutt R."/>
            <person name="Wedler E."/>
            <person name="Wedler H."/>
            <person name="Weitzenegger T."/>
            <person name="Winters P."/>
            <person name="Wipat A."/>
            <person name="Yamamoto H."/>
            <person name="Yamane K."/>
            <person name="Yasumoto K."/>
            <person name="Yata K."/>
            <person name="Yoshida K."/>
            <person name="Yoshikawa H.-F."/>
            <person name="Zumstein E."/>
            <person name="Yoshikawa H."/>
            <person name="Danchin A."/>
        </authorList>
    </citation>
    <scope>NUCLEOTIDE SEQUENCE [LARGE SCALE GENOMIC DNA]</scope>
    <source>
        <strain>168</strain>
    </source>
</reference>
<reference key="2">
    <citation type="journal article" date="2004" name="Res. Microbiol.">
        <title>The metNPQ operon of Bacillus subtilis encodes an ABC permease transporting methionine sulfoxide, D- and L-methionine.</title>
        <authorList>
            <person name="Hullo M.-F."/>
            <person name="Auger S."/>
            <person name="Dassa E."/>
            <person name="Danchin A."/>
            <person name="Martin-Verstraete I."/>
        </authorList>
    </citation>
    <scope>FUNCTION IN METHIONINE AND METHIONINE SULFOXIDE TRANSPORT</scope>
    <scope>CATALYTIC ACTIVITY</scope>
    <scope>INDUCTION</scope>
    <source>
        <strain>168</strain>
    </source>
</reference>
<organism>
    <name type="scientific">Bacillus subtilis (strain 168)</name>
    <dbReference type="NCBI Taxonomy" id="224308"/>
    <lineage>
        <taxon>Bacteria</taxon>
        <taxon>Bacillati</taxon>
        <taxon>Bacillota</taxon>
        <taxon>Bacilli</taxon>
        <taxon>Bacillales</taxon>
        <taxon>Bacillaceae</taxon>
        <taxon>Bacillus</taxon>
    </lineage>
</organism>
<name>METN_BACSU</name>
<dbReference type="EC" id="7.4.2.11" evidence="1 2"/>
<dbReference type="EMBL" id="AL009126">
    <property type="protein sequence ID" value="CAB15264.1"/>
    <property type="molecule type" value="Genomic_DNA"/>
</dbReference>
<dbReference type="PIR" id="D70020">
    <property type="entry name" value="D70020"/>
</dbReference>
<dbReference type="RefSeq" id="NP_391154.1">
    <property type="nucleotide sequence ID" value="NC_000964.3"/>
</dbReference>
<dbReference type="RefSeq" id="WP_003242531.1">
    <property type="nucleotide sequence ID" value="NZ_OZ025638.1"/>
</dbReference>
<dbReference type="SMR" id="O32169"/>
<dbReference type="FunCoup" id="O32169">
    <property type="interactions" value="605"/>
</dbReference>
<dbReference type="IntAct" id="O32169">
    <property type="interactions" value="1"/>
</dbReference>
<dbReference type="MINT" id="O32169"/>
<dbReference type="STRING" id="224308.BSU32750"/>
<dbReference type="TCDB" id="3.A.1.24.2">
    <property type="family name" value="the atp-binding cassette (abc) superfamily"/>
</dbReference>
<dbReference type="PaxDb" id="224308-BSU32750"/>
<dbReference type="EnsemblBacteria" id="CAB15264">
    <property type="protein sequence ID" value="CAB15264"/>
    <property type="gene ID" value="BSU_32750"/>
</dbReference>
<dbReference type="GeneID" id="86872185"/>
<dbReference type="GeneID" id="936700"/>
<dbReference type="KEGG" id="bsu:BSU32750"/>
<dbReference type="PATRIC" id="fig|224308.179.peg.3548"/>
<dbReference type="eggNOG" id="COG1135">
    <property type="taxonomic scope" value="Bacteria"/>
</dbReference>
<dbReference type="InParanoid" id="O32169"/>
<dbReference type="OrthoDB" id="9802264at2"/>
<dbReference type="PhylomeDB" id="O32169"/>
<dbReference type="BioCyc" id="BSUB:BSU32750-MONOMER"/>
<dbReference type="Proteomes" id="UP000001570">
    <property type="component" value="Chromosome"/>
</dbReference>
<dbReference type="GO" id="GO:0005886">
    <property type="term" value="C:plasma membrane"/>
    <property type="evidence" value="ECO:0007669"/>
    <property type="project" value="UniProtKB-SubCell"/>
</dbReference>
<dbReference type="GO" id="GO:0033232">
    <property type="term" value="F:ABC-type D-methionine transporter activity"/>
    <property type="evidence" value="ECO:0007669"/>
    <property type="project" value="UniProtKB-EC"/>
</dbReference>
<dbReference type="GO" id="GO:0005524">
    <property type="term" value="F:ATP binding"/>
    <property type="evidence" value="ECO:0007669"/>
    <property type="project" value="UniProtKB-KW"/>
</dbReference>
<dbReference type="GO" id="GO:0016887">
    <property type="term" value="F:ATP hydrolysis activity"/>
    <property type="evidence" value="ECO:0007669"/>
    <property type="project" value="InterPro"/>
</dbReference>
<dbReference type="CDD" id="cd03258">
    <property type="entry name" value="ABC_MetN_methionine_transporter"/>
    <property type="match status" value="1"/>
</dbReference>
<dbReference type="FunFam" id="3.40.50.300:FF:000056">
    <property type="entry name" value="Cell division ATP-binding protein FtsE"/>
    <property type="match status" value="1"/>
</dbReference>
<dbReference type="Gene3D" id="3.30.70.260">
    <property type="match status" value="1"/>
</dbReference>
<dbReference type="Gene3D" id="3.40.50.300">
    <property type="entry name" value="P-loop containing nucleotide triphosphate hydrolases"/>
    <property type="match status" value="1"/>
</dbReference>
<dbReference type="InterPro" id="IPR003593">
    <property type="entry name" value="AAA+_ATPase"/>
</dbReference>
<dbReference type="InterPro" id="IPR003439">
    <property type="entry name" value="ABC_transporter-like_ATP-bd"/>
</dbReference>
<dbReference type="InterPro" id="IPR017871">
    <property type="entry name" value="ABC_transporter-like_CS"/>
</dbReference>
<dbReference type="InterPro" id="IPR045865">
    <property type="entry name" value="ACT-like_dom_sf"/>
</dbReference>
<dbReference type="InterPro" id="IPR041701">
    <property type="entry name" value="MetN_ABC"/>
</dbReference>
<dbReference type="InterPro" id="IPR050086">
    <property type="entry name" value="MetN_ABC_transporter-like"/>
</dbReference>
<dbReference type="InterPro" id="IPR018449">
    <property type="entry name" value="NIL_domain"/>
</dbReference>
<dbReference type="InterPro" id="IPR027417">
    <property type="entry name" value="P-loop_NTPase"/>
</dbReference>
<dbReference type="PANTHER" id="PTHR43166">
    <property type="entry name" value="AMINO ACID IMPORT ATP-BINDING PROTEIN"/>
    <property type="match status" value="1"/>
</dbReference>
<dbReference type="PANTHER" id="PTHR43166:SF36">
    <property type="entry name" value="METHIONINE IMPORT ATP-BINDING PROTEIN METN 2"/>
    <property type="match status" value="1"/>
</dbReference>
<dbReference type="Pfam" id="PF00005">
    <property type="entry name" value="ABC_tran"/>
    <property type="match status" value="1"/>
</dbReference>
<dbReference type="Pfam" id="PF09383">
    <property type="entry name" value="NIL"/>
    <property type="match status" value="1"/>
</dbReference>
<dbReference type="SMART" id="SM00382">
    <property type="entry name" value="AAA"/>
    <property type="match status" value="1"/>
</dbReference>
<dbReference type="SMART" id="SM00930">
    <property type="entry name" value="NIL"/>
    <property type="match status" value="1"/>
</dbReference>
<dbReference type="SUPFAM" id="SSF55021">
    <property type="entry name" value="ACT-like"/>
    <property type="match status" value="1"/>
</dbReference>
<dbReference type="SUPFAM" id="SSF52540">
    <property type="entry name" value="P-loop containing nucleoside triphosphate hydrolases"/>
    <property type="match status" value="1"/>
</dbReference>
<dbReference type="PROSITE" id="PS00211">
    <property type="entry name" value="ABC_TRANSPORTER_1"/>
    <property type="match status" value="1"/>
</dbReference>
<dbReference type="PROSITE" id="PS50893">
    <property type="entry name" value="ABC_TRANSPORTER_2"/>
    <property type="match status" value="1"/>
</dbReference>
<dbReference type="PROSITE" id="PS51264">
    <property type="entry name" value="METN"/>
    <property type="match status" value="1"/>
</dbReference>
<comment type="function">
    <text evidence="2 4">Part of the ABC transporter complex MetNPQ involved in methionine import (PubMed:14990259). Responsible for energy coupling to the transport system (Probable). It has also been shown to be involved in methionine sulfoxide transport (PubMed:14990259).</text>
</comment>
<comment type="catalytic activity">
    <reaction evidence="1 2">
        <text>L-methionine(out) + ATP + H2O = L-methionine(in) + ADP + phosphate + H(+)</text>
        <dbReference type="Rhea" id="RHEA:29779"/>
        <dbReference type="ChEBI" id="CHEBI:15377"/>
        <dbReference type="ChEBI" id="CHEBI:15378"/>
        <dbReference type="ChEBI" id="CHEBI:30616"/>
        <dbReference type="ChEBI" id="CHEBI:43474"/>
        <dbReference type="ChEBI" id="CHEBI:57844"/>
        <dbReference type="ChEBI" id="CHEBI:456216"/>
        <dbReference type="EC" id="7.4.2.11"/>
    </reaction>
</comment>
<comment type="catalytic activity">
    <reaction evidence="1 2">
        <text>D-methionine(out) + ATP + H2O = D-methionine(in) + ADP + phosphate + H(+)</text>
        <dbReference type="Rhea" id="RHEA:29767"/>
        <dbReference type="ChEBI" id="CHEBI:15377"/>
        <dbReference type="ChEBI" id="CHEBI:15378"/>
        <dbReference type="ChEBI" id="CHEBI:30616"/>
        <dbReference type="ChEBI" id="CHEBI:43474"/>
        <dbReference type="ChEBI" id="CHEBI:57932"/>
        <dbReference type="ChEBI" id="CHEBI:456216"/>
        <dbReference type="EC" id="7.4.2.11"/>
    </reaction>
</comment>
<comment type="subunit">
    <text evidence="1">The complex is composed of two ATP-binding proteins (MetN), two transmembrane proteins (MetP) and a solute-binding protein (MetQ).</text>
</comment>
<comment type="subcellular location">
    <subcellularLocation>
        <location evidence="1">Cell membrane</location>
        <topology evidence="1">Peripheral membrane protein</topology>
    </subcellularLocation>
</comment>
<comment type="induction">
    <text evidence="2">Repressed by methionine via the S-box system.</text>
</comment>
<comment type="similarity">
    <text evidence="1">Belongs to the ABC transporter superfamily. Methionine importer (TC 3.A.1.24) family.</text>
</comment>